<sequence length="656" mass="75202">MKNQTKSNSLFQLSTNYIPTGDQPEAIKKLSEFKTKQQVLLGATGTGKTFTIANVIQNSQLPTVVIAHNKTLAGQLFNELKQLFPKNAVEYFISYFDFYQPEAYLPSKGIYIEKSATVNEAIKRLRVSTLHSLSTRKDVIVVGSVASIYPTSSPSDFVKYCLWFVVGKDYDLKTIKDRLVSLNYVVNKQQLTPGKFRFQGDVLEVFPGYSDAFVIRISFFDTKVEQICQIDPLTNKILNQLFEIKIGPADEYVVNQSDLDIAIKNIKQELQERVNYFNKQNLVERAQRLATITNHDLNDLKAWGFCSGVENYARHLELRMANSTPYSIFDYFKGDWLLVIDESHQTLPQLNGMYNTDLSRKQSLIDYGFRLPSALDNRPLSFAELQQKMQKVIYVSATPRDKEISLSQNNVIEQLVRPTYLVDPIIVVKPKDNQVEDLIEEIINQRQNNTRTFVTVLTIKMAENLTEYLKERKIKVAYIHKDIKALERLLLINDLRRGEYECLVGINLLREGLDVPEVALVCIFDADIPGLPRDERSLIQIIGRAARNEHGRVVMYANHVTEQMQKAIDETKRRRTVQMEYNKLHNKTPKTVVKPLTFVQPIKLKAKSNAEKNAALIKQLTKEMKKAAANQNYELAIEIRDSIFELEKEIGSKIKV</sequence>
<name>UVRB_MYCGE</name>
<keyword id="KW-0067">ATP-binding</keyword>
<keyword id="KW-0963">Cytoplasm</keyword>
<keyword id="KW-0227">DNA damage</keyword>
<keyword id="KW-0228">DNA excision</keyword>
<keyword id="KW-0234">DNA repair</keyword>
<keyword id="KW-0267">Excision nuclease</keyword>
<keyword id="KW-0547">Nucleotide-binding</keyword>
<keyword id="KW-1185">Reference proteome</keyword>
<keyword id="KW-0742">SOS response</keyword>
<dbReference type="EMBL" id="L43967">
    <property type="protein sequence ID" value="AAC71291.1"/>
    <property type="molecule type" value="Genomic_DNA"/>
</dbReference>
<dbReference type="EMBL" id="U01743">
    <property type="protein sequence ID" value="AAD10554.1"/>
    <property type="status" value="ALT_INIT"/>
    <property type="molecule type" value="Genomic_DNA"/>
</dbReference>
<dbReference type="EMBL" id="U02119">
    <property type="protein sequence ID" value="AAD12393.1"/>
    <property type="molecule type" value="Genomic_DNA"/>
</dbReference>
<dbReference type="EMBL" id="U01698">
    <property type="protein sequence ID" value="AAB01010.1"/>
    <property type="molecule type" value="Genomic_DNA"/>
</dbReference>
<dbReference type="PIR" id="A64208">
    <property type="entry name" value="A64208"/>
</dbReference>
<dbReference type="RefSeq" id="WP_010869318.1">
    <property type="nucleotide sequence ID" value="NC_000908.2"/>
</dbReference>
<dbReference type="SMR" id="P47319"/>
<dbReference type="FunCoup" id="P47319">
    <property type="interactions" value="99"/>
</dbReference>
<dbReference type="STRING" id="243273.MG_073"/>
<dbReference type="GeneID" id="88282196"/>
<dbReference type="KEGG" id="mge:MG_073"/>
<dbReference type="eggNOG" id="COG0556">
    <property type="taxonomic scope" value="Bacteria"/>
</dbReference>
<dbReference type="HOGENOM" id="CLU_009621_2_1_14"/>
<dbReference type="InParanoid" id="P47319"/>
<dbReference type="OrthoDB" id="9806651at2"/>
<dbReference type="BioCyc" id="MGEN243273:G1GJ2-85-MONOMER"/>
<dbReference type="Proteomes" id="UP000000807">
    <property type="component" value="Chromosome"/>
</dbReference>
<dbReference type="GO" id="GO:0005737">
    <property type="term" value="C:cytoplasm"/>
    <property type="evidence" value="ECO:0007669"/>
    <property type="project" value="UniProtKB-SubCell"/>
</dbReference>
<dbReference type="GO" id="GO:0009380">
    <property type="term" value="C:excinuclease repair complex"/>
    <property type="evidence" value="ECO:0000318"/>
    <property type="project" value="GO_Central"/>
</dbReference>
<dbReference type="GO" id="GO:0005524">
    <property type="term" value="F:ATP binding"/>
    <property type="evidence" value="ECO:0007669"/>
    <property type="project" value="UniProtKB-UniRule"/>
</dbReference>
<dbReference type="GO" id="GO:0016887">
    <property type="term" value="F:ATP hydrolysis activity"/>
    <property type="evidence" value="ECO:0007669"/>
    <property type="project" value="InterPro"/>
</dbReference>
<dbReference type="GO" id="GO:0003677">
    <property type="term" value="F:DNA binding"/>
    <property type="evidence" value="ECO:0007669"/>
    <property type="project" value="UniProtKB-UniRule"/>
</dbReference>
<dbReference type="GO" id="GO:0009381">
    <property type="term" value="F:excinuclease ABC activity"/>
    <property type="evidence" value="ECO:0007669"/>
    <property type="project" value="UniProtKB-UniRule"/>
</dbReference>
<dbReference type="GO" id="GO:0000715">
    <property type="term" value="P:nucleotide-excision repair, DNA damage recognition"/>
    <property type="evidence" value="ECO:0000318"/>
    <property type="project" value="GO_Central"/>
</dbReference>
<dbReference type="GO" id="GO:0009432">
    <property type="term" value="P:SOS response"/>
    <property type="evidence" value="ECO:0007669"/>
    <property type="project" value="UniProtKB-UniRule"/>
</dbReference>
<dbReference type="CDD" id="cd17916">
    <property type="entry name" value="DEXHc_UvrB"/>
    <property type="match status" value="1"/>
</dbReference>
<dbReference type="CDD" id="cd18790">
    <property type="entry name" value="SF2_C_UvrB"/>
    <property type="match status" value="1"/>
</dbReference>
<dbReference type="Gene3D" id="3.40.50.300">
    <property type="entry name" value="P-loop containing nucleotide triphosphate hydrolases"/>
    <property type="match status" value="3"/>
</dbReference>
<dbReference type="Gene3D" id="4.10.860.10">
    <property type="entry name" value="UVR domain"/>
    <property type="match status" value="1"/>
</dbReference>
<dbReference type="HAMAP" id="MF_00204">
    <property type="entry name" value="UvrB"/>
    <property type="match status" value="1"/>
</dbReference>
<dbReference type="InterPro" id="IPR006935">
    <property type="entry name" value="Helicase/UvrB_N"/>
</dbReference>
<dbReference type="InterPro" id="IPR014001">
    <property type="entry name" value="Helicase_ATP-bd"/>
</dbReference>
<dbReference type="InterPro" id="IPR001650">
    <property type="entry name" value="Helicase_C-like"/>
</dbReference>
<dbReference type="InterPro" id="IPR027417">
    <property type="entry name" value="P-loop_NTPase"/>
</dbReference>
<dbReference type="InterPro" id="IPR001943">
    <property type="entry name" value="UVR_dom"/>
</dbReference>
<dbReference type="InterPro" id="IPR036876">
    <property type="entry name" value="UVR_dom_sf"/>
</dbReference>
<dbReference type="InterPro" id="IPR004807">
    <property type="entry name" value="UvrB"/>
</dbReference>
<dbReference type="InterPro" id="IPR041471">
    <property type="entry name" value="UvrB_inter"/>
</dbReference>
<dbReference type="InterPro" id="IPR024759">
    <property type="entry name" value="UvrB_YAD/RRR_dom"/>
</dbReference>
<dbReference type="NCBIfam" id="NF003673">
    <property type="entry name" value="PRK05298.1"/>
    <property type="match status" value="1"/>
</dbReference>
<dbReference type="NCBIfam" id="TIGR00631">
    <property type="entry name" value="uvrb"/>
    <property type="match status" value="1"/>
</dbReference>
<dbReference type="PANTHER" id="PTHR24029">
    <property type="entry name" value="UVRABC SYSTEM PROTEIN B"/>
    <property type="match status" value="1"/>
</dbReference>
<dbReference type="PANTHER" id="PTHR24029:SF0">
    <property type="entry name" value="UVRABC SYSTEM PROTEIN B"/>
    <property type="match status" value="1"/>
</dbReference>
<dbReference type="Pfam" id="PF00271">
    <property type="entry name" value="Helicase_C"/>
    <property type="match status" value="1"/>
</dbReference>
<dbReference type="Pfam" id="PF04851">
    <property type="entry name" value="ResIII"/>
    <property type="match status" value="1"/>
</dbReference>
<dbReference type="Pfam" id="PF02151">
    <property type="entry name" value="UVR"/>
    <property type="match status" value="1"/>
</dbReference>
<dbReference type="Pfam" id="PF12344">
    <property type="entry name" value="UvrB"/>
    <property type="match status" value="1"/>
</dbReference>
<dbReference type="Pfam" id="PF17757">
    <property type="entry name" value="UvrB_inter"/>
    <property type="match status" value="1"/>
</dbReference>
<dbReference type="SMART" id="SM00487">
    <property type="entry name" value="DEXDc"/>
    <property type="match status" value="1"/>
</dbReference>
<dbReference type="SMART" id="SM00490">
    <property type="entry name" value="HELICc"/>
    <property type="match status" value="1"/>
</dbReference>
<dbReference type="SUPFAM" id="SSF46600">
    <property type="entry name" value="C-terminal UvrC-binding domain of UvrB"/>
    <property type="match status" value="1"/>
</dbReference>
<dbReference type="SUPFAM" id="SSF52540">
    <property type="entry name" value="P-loop containing nucleoside triphosphate hydrolases"/>
    <property type="match status" value="2"/>
</dbReference>
<dbReference type="PROSITE" id="PS51192">
    <property type="entry name" value="HELICASE_ATP_BIND_1"/>
    <property type="match status" value="1"/>
</dbReference>
<dbReference type="PROSITE" id="PS51194">
    <property type="entry name" value="HELICASE_CTER"/>
    <property type="match status" value="1"/>
</dbReference>
<dbReference type="PROSITE" id="PS50151">
    <property type="entry name" value="UVR"/>
    <property type="match status" value="1"/>
</dbReference>
<accession>P47319</accession>
<accession>Q49254</accession>
<accession>Q49446</accession>
<accession>Q49506</accession>
<organism>
    <name type="scientific">Mycoplasma genitalium (strain ATCC 33530 / DSM 19775 / NCTC 10195 / G37)</name>
    <name type="common">Mycoplasmoides genitalium</name>
    <dbReference type="NCBI Taxonomy" id="243273"/>
    <lineage>
        <taxon>Bacteria</taxon>
        <taxon>Bacillati</taxon>
        <taxon>Mycoplasmatota</taxon>
        <taxon>Mycoplasmoidales</taxon>
        <taxon>Mycoplasmoidaceae</taxon>
        <taxon>Mycoplasmoides</taxon>
    </lineage>
</organism>
<protein>
    <recommendedName>
        <fullName evidence="1">UvrABC system protein B</fullName>
        <shortName evidence="1">Protein UvrB</shortName>
    </recommendedName>
    <alternativeName>
        <fullName evidence="1">Excinuclease ABC subunit B</fullName>
    </alternativeName>
</protein>
<feature type="chain" id="PRO_0000138407" description="UvrABC system protein B">
    <location>
        <begin position="1"/>
        <end position="656"/>
    </location>
</feature>
<feature type="domain" description="Helicase ATP-binding" evidence="1">
    <location>
        <begin position="29"/>
        <end position="414"/>
    </location>
</feature>
<feature type="domain" description="Helicase C-terminal" evidence="1">
    <location>
        <begin position="434"/>
        <end position="596"/>
    </location>
</feature>
<feature type="domain" description="UVR" evidence="1">
    <location>
        <begin position="614"/>
        <end position="649"/>
    </location>
</feature>
<feature type="short sequence motif" description="Beta-hairpin">
    <location>
        <begin position="95"/>
        <end position="118"/>
    </location>
</feature>
<feature type="binding site" evidence="1">
    <location>
        <begin position="42"/>
        <end position="49"/>
    </location>
    <ligand>
        <name>ATP</name>
        <dbReference type="ChEBI" id="CHEBI:30616"/>
    </ligand>
</feature>
<feature type="sequence conflict" description="In Ref. 2." evidence="2" ref="2">
    <original>G</original>
    <variation>A</variation>
    <location>
        <position position="45"/>
    </location>
</feature>
<feature type="sequence conflict" description="In Ref. 2; AAD12393." evidence="2" ref="2">
    <original>EAYLPS</original>
    <variation>KLTYPD</variation>
    <location>
        <begin position="102"/>
        <end position="107"/>
    </location>
</feature>
<feature type="sequence conflict" description="In Ref. 2." evidence="2" ref="2">
    <original>DN</original>
    <variation>IT</variation>
    <location>
        <begin position="432"/>
        <end position="433"/>
    </location>
</feature>
<comment type="function">
    <text evidence="1">The UvrABC repair system catalyzes the recognition and processing of DNA lesions. A damage recognition complex composed of 2 UvrA and 2 UvrB subunits scans DNA for abnormalities. Upon binding of the UvrA(2)B(2) complex to a putative damaged site, the DNA wraps around one UvrB monomer. DNA wrap is dependent on ATP binding by UvrB and probably causes local melting of the DNA helix, facilitating insertion of UvrB beta-hairpin between the DNA strands. Then UvrB probes one DNA strand for the presence of a lesion. If a lesion is found the UvrA subunits dissociate and the UvrB-DNA preincision complex is formed. This complex is subsequently bound by UvrC and the second UvrB is released. If no lesion is found, the DNA wraps around the other UvrB subunit that will check the other stand for damage.</text>
</comment>
<comment type="subunit">
    <text evidence="1">Forms a heterotetramer with UvrA during the search for lesions. Interacts with UvrC in an incision complex.</text>
</comment>
<comment type="subcellular location">
    <subcellularLocation>
        <location evidence="1">Cytoplasm</location>
    </subcellularLocation>
</comment>
<comment type="domain">
    <text evidence="1">The beta-hairpin motif is involved in DNA binding.</text>
</comment>
<comment type="similarity">
    <text evidence="1">Belongs to the UvrB family.</text>
</comment>
<comment type="sequence caution" evidence="2">
    <conflict type="erroneous initiation">
        <sequence resource="EMBL-CDS" id="AAD10554"/>
    </conflict>
</comment>
<evidence type="ECO:0000255" key="1">
    <source>
        <dbReference type="HAMAP-Rule" id="MF_00204"/>
    </source>
</evidence>
<evidence type="ECO:0000305" key="2"/>
<reference key="1">
    <citation type="journal article" date="1995" name="Science">
        <title>The minimal gene complement of Mycoplasma genitalium.</title>
        <authorList>
            <person name="Fraser C.M."/>
            <person name="Gocayne J.D."/>
            <person name="White O."/>
            <person name="Adams M.D."/>
            <person name="Clayton R.A."/>
            <person name="Fleischmann R.D."/>
            <person name="Bult C.J."/>
            <person name="Kerlavage A.R."/>
            <person name="Sutton G.G."/>
            <person name="Kelley J.M."/>
            <person name="Fritchman J.L."/>
            <person name="Weidman J.F."/>
            <person name="Small K.V."/>
            <person name="Sandusky M."/>
            <person name="Fuhrmann J.L."/>
            <person name="Nguyen D.T."/>
            <person name="Utterback T.R."/>
            <person name="Saudek D.M."/>
            <person name="Phillips C.A."/>
            <person name="Merrick J.M."/>
            <person name="Tomb J.-F."/>
            <person name="Dougherty B.A."/>
            <person name="Bott K.F."/>
            <person name="Hu P.-C."/>
            <person name="Lucier T.S."/>
            <person name="Peterson S.N."/>
            <person name="Smith H.O."/>
            <person name="Hutchison C.A. III"/>
            <person name="Venter J.C."/>
        </authorList>
    </citation>
    <scope>NUCLEOTIDE SEQUENCE [LARGE SCALE GENOMIC DNA]</scope>
    <source>
        <strain>ATCC 33530 / DSM 19775 / NCTC 10195 / G37</strain>
    </source>
</reference>
<reference key="2">
    <citation type="journal article" date="1993" name="J. Bacteriol.">
        <title>A survey of the Mycoplasma genitalium genome by using random sequencing.</title>
        <authorList>
            <person name="Peterson S.N."/>
            <person name="Hu P.-C."/>
            <person name="Bott K.F."/>
            <person name="Hutchison C.A. III"/>
        </authorList>
    </citation>
    <scope>NUCLEOTIDE SEQUENCE [GENOMIC DNA] OF 1-78; 102-231 AND 414-528</scope>
    <source>
        <strain>ATCC 33530 / DSM 19775 / NCTC 10195 / G37</strain>
    </source>
</reference>
<gene>
    <name evidence="1" type="primary">uvrB</name>
    <name type="ordered locus">MG073</name>
</gene>
<proteinExistence type="inferred from homology"/>